<sequence length="379" mass="41313">MAKRDYYEILGVSKTAEEREIKKAYKRLAMKYHPDRNQGDKEAEAKFKEIKEAYEVLTDAQKRAAYDQYGHAAFEQGGMGGGFGGGFNGGADFSDIFGDVFGDIFGGGRGRQRAARGADLRYNMDLTLEEAVRGVTKEIRIPTLEECDVCHGSGAKAGTQPQTCPTCHGSGQVQMRQGFFAVQQTCPHCQGRGTLIKDPCHKCHGHGRVEKSKTLSVKIPAGVDTGDRIRLAGEGEAGEHGAPAGDLYVQVQVKQHPIFEREGNNLYCEVPINFAMAALGGEIEVPTLDGRVMLKVPSETQTGKLFRMRGKGVKSVRGGAQGDLLCRVVVETPVGLSEKQKQLLKDLQESFGGPTGEKNSPRSKSFFDGVKKFFDDLTR</sequence>
<feature type="initiator methionine" description="Removed" evidence="1">
    <location>
        <position position="1"/>
    </location>
</feature>
<feature type="chain" id="PRO_0000070878" description="Chaperone protein DnaJ">
    <location>
        <begin position="2"/>
        <end position="379"/>
    </location>
</feature>
<feature type="domain" description="J" evidence="2">
    <location>
        <begin position="5"/>
        <end position="70"/>
    </location>
</feature>
<feature type="repeat" description="CXXCXGXG motif">
    <location>
        <begin position="147"/>
        <end position="154"/>
    </location>
</feature>
<feature type="repeat" description="CXXCXGXG motif">
    <location>
        <begin position="164"/>
        <end position="171"/>
    </location>
</feature>
<feature type="repeat" description="CXXCXGXG motif">
    <location>
        <begin position="186"/>
        <end position="193"/>
    </location>
</feature>
<feature type="repeat" description="CXXCXGXG motif">
    <location>
        <begin position="200"/>
        <end position="207"/>
    </location>
</feature>
<feature type="zinc finger region" description="CR-type" evidence="2">
    <location>
        <begin position="134"/>
        <end position="212"/>
    </location>
</feature>
<feature type="binding site" evidence="2">
    <location>
        <position position="147"/>
    </location>
    <ligand>
        <name>Zn(2+)</name>
        <dbReference type="ChEBI" id="CHEBI:29105"/>
        <label>1</label>
    </ligand>
</feature>
<feature type="binding site" evidence="2">
    <location>
        <position position="150"/>
    </location>
    <ligand>
        <name>Zn(2+)</name>
        <dbReference type="ChEBI" id="CHEBI:29105"/>
        <label>1</label>
    </ligand>
</feature>
<feature type="binding site" evidence="2">
    <location>
        <position position="164"/>
    </location>
    <ligand>
        <name>Zn(2+)</name>
        <dbReference type="ChEBI" id="CHEBI:29105"/>
        <label>2</label>
    </ligand>
</feature>
<feature type="binding site" evidence="2">
    <location>
        <position position="167"/>
    </location>
    <ligand>
        <name>Zn(2+)</name>
        <dbReference type="ChEBI" id="CHEBI:29105"/>
        <label>2</label>
    </ligand>
</feature>
<feature type="binding site" evidence="2">
    <location>
        <position position="186"/>
    </location>
    <ligand>
        <name>Zn(2+)</name>
        <dbReference type="ChEBI" id="CHEBI:29105"/>
        <label>2</label>
    </ligand>
</feature>
<feature type="binding site" evidence="2">
    <location>
        <position position="189"/>
    </location>
    <ligand>
        <name>Zn(2+)</name>
        <dbReference type="ChEBI" id="CHEBI:29105"/>
        <label>2</label>
    </ligand>
</feature>
<feature type="binding site" evidence="2">
    <location>
        <position position="200"/>
    </location>
    <ligand>
        <name>Zn(2+)</name>
        <dbReference type="ChEBI" id="CHEBI:29105"/>
        <label>1</label>
    </ligand>
</feature>
<feature type="binding site" evidence="2">
    <location>
        <position position="203"/>
    </location>
    <ligand>
        <name>Zn(2+)</name>
        <dbReference type="ChEBI" id="CHEBI:29105"/>
        <label>1</label>
    </ligand>
</feature>
<name>DNAJ_SALTY</name>
<comment type="function">
    <text evidence="2 3">Participates actively in the response to hyperosmotic and heat shock by preventing the aggregation of stress-denatured proteins and by disaggregating proteins, also in an autonomous, DnaK-independent fashion. Unfolded proteins bind initially to DnaJ; upon interaction with the DnaJ-bound protein, DnaK hydrolyzes its bound ATP, resulting in the formation of a stable complex. GrpE releases ADP from DnaK; ATP binding to DnaK triggers the release of the substrate protein, thus completing the reaction cycle. Several rounds of ATP-dependent interactions between DnaJ, DnaK and GrpE are required for fully efficient folding. Also involved, together with DnaK and GrpE, in the DNA replication of plasmids through activation of initiation proteins (By similarity). Necessary for invasion of epithelial cells, secretion of invasion proteins and proliferation within macrophages.</text>
</comment>
<comment type="cofactor">
    <cofactor evidence="2">
        <name>Zn(2+)</name>
        <dbReference type="ChEBI" id="CHEBI:29105"/>
    </cofactor>
    <text evidence="2">Binds 2 Zn(2+) ions per monomer.</text>
</comment>
<comment type="subunit">
    <text evidence="2">Homodimer.</text>
</comment>
<comment type="subcellular location">
    <subcellularLocation>
        <location evidence="2">Cytoplasm</location>
    </subcellularLocation>
</comment>
<comment type="induction">
    <text evidence="1">By heat shock under the control of the HtpR regulatory protein.</text>
</comment>
<comment type="domain">
    <text evidence="2">The J domain is necessary and sufficient to stimulate DnaK ATPase activity. Zinc center 1 plays an important role in the autonomous, DnaK-independent chaperone activity of DnaJ. Zinc center 2 is essential for interaction with DnaK and for DnaJ activity.</text>
</comment>
<comment type="similarity">
    <text evidence="2">Belongs to the DnaJ family.</text>
</comment>
<proteinExistence type="inferred from homology"/>
<accession>P0A1G7</accession>
<accession>Q60004</accession>
<organism>
    <name type="scientific">Salmonella typhimurium (strain LT2 / SGSC1412 / ATCC 700720)</name>
    <dbReference type="NCBI Taxonomy" id="99287"/>
    <lineage>
        <taxon>Bacteria</taxon>
        <taxon>Pseudomonadati</taxon>
        <taxon>Pseudomonadota</taxon>
        <taxon>Gammaproteobacteria</taxon>
        <taxon>Enterobacterales</taxon>
        <taxon>Enterobacteriaceae</taxon>
        <taxon>Salmonella</taxon>
    </lineage>
</organism>
<gene>
    <name evidence="2" type="primary">dnaJ</name>
    <name type="ordered locus">STM0013</name>
</gene>
<protein>
    <recommendedName>
        <fullName evidence="2">Chaperone protein DnaJ</fullName>
    </recommendedName>
</protein>
<dbReference type="EMBL" id="U58360">
    <property type="protein sequence ID" value="AAB02911.1"/>
    <property type="molecule type" value="Genomic_DNA"/>
</dbReference>
<dbReference type="EMBL" id="AE006468">
    <property type="protein sequence ID" value="AAL18977.1"/>
    <property type="molecule type" value="Genomic_DNA"/>
</dbReference>
<dbReference type="RefSeq" id="NP_459018.1">
    <property type="nucleotide sequence ID" value="NC_003197.2"/>
</dbReference>
<dbReference type="RefSeq" id="WP_001119009.1">
    <property type="nucleotide sequence ID" value="NC_003197.2"/>
</dbReference>
<dbReference type="SMR" id="P0A1G7"/>
<dbReference type="STRING" id="99287.STM0013"/>
<dbReference type="PaxDb" id="99287-STM0013"/>
<dbReference type="GeneID" id="1251531"/>
<dbReference type="KEGG" id="stm:STM0013"/>
<dbReference type="PATRIC" id="fig|99287.12.peg.13"/>
<dbReference type="HOGENOM" id="CLU_017633_0_7_6"/>
<dbReference type="OMA" id="MATDYYA"/>
<dbReference type="PhylomeDB" id="P0A1G7"/>
<dbReference type="BioCyc" id="SENT99287:STM0013-MONOMER"/>
<dbReference type="Proteomes" id="UP000001014">
    <property type="component" value="Chromosome"/>
</dbReference>
<dbReference type="GO" id="GO:0005737">
    <property type="term" value="C:cytoplasm"/>
    <property type="evidence" value="ECO:0000318"/>
    <property type="project" value="GO_Central"/>
</dbReference>
<dbReference type="GO" id="GO:0005524">
    <property type="term" value="F:ATP binding"/>
    <property type="evidence" value="ECO:0007669"/>
    <property type="project" value="InterPro"/>
</dbReference>
<dbReference type="GO" id="GO:0031072">
    <property type="term" value="F:heat shock protein binding"/>
    <property type="evidence" value="ECO:0007669"/>
    <property type="project" value="InterPro"/>
</dbReference>
<dbReference type="GO" id="GO:0051082">
    <property type="term" value="F:unfolded protein binding"/>
    <property type="evidence" value="ECO:0000318"/>
    <property type="project" value="GO_Central"/>
</dbReference>
<dbReference type="GO" id="GO:0008270">
    <property type="term" value="F:zinc ion binding"/>
    <property type="evidence" value="ECO:0007669"/>
    <property type="project" value="UniProtKB-UniRule"/>
</dbReference>
<dbReference type="GO" id="GO:0051085">
    <property type="term" value="P:chaperone cofactor-dependent protein refolding"/>
    <property type="evidence" value="ECO:0000318"/>
    <property type="project" value="GO_Central"/>
</dbReference>
<dbReference type="GO" id="GO:0006260">
    <property type="term" value="P:DNA replication"/>
    <property type="evidence" value="ECO:0007669"/>
    <property type="project" value="UniProtKB-KW"/>
</dbReference>
<dbReference type="GO" id="GO:0042026">
    <property type="term" value="P:protein refolding"/>
    <property type="evidence" value="ECO:0000318"/>
    <property type="project" value="GO_Central"/>
</dbReference>
<dbReference type="GO" id="GO:0009408">
    <property type="term" value="P:response to heat"/>
    <property type="evidence" value="ECO:0007669"/>
    <property type="project" value="InterPro"/>
</dbReference>
<dbReference type="CDD" id="cd06257">
    <property type="entry name" value="DnaJ"/>
    <property type="match status" value="1"/>
</dbReference>
<dbReference type="CDD" id="cd10747">
    <property type="entry name" value="DnaJ_C"/>
    <property type="match status" value="1"/>
</dbReference>
<dbReference type="CDD" id="cd10719">
    <property type="entry name" value="DnaJ_zf"/>
    <property type="match status" value="1"/>
</dbReference>
<dbReference type="FunFam" id="1.10.287.110:FF:000003">
    <property type="entry name" value="Molecular chaperone DnaJ"/>
    <property type="match status" value="1"/>
</dbReference>
<dbReference type="FunFam" id="2.10.230.10:FF:000002">
    <property type="entry name" value="Molecular chaperone DnaJ"/>
    <property type="match status" value="1"/>
</dbReference>
<dbReference type="FunFam" id="2.60.260.20:FF:000004">
    <property type="entry name" value="Molecular chaperone DnaJ"/>
    <property type="match status" value="1"/>
</dbReference>
<dbReference type="Gene3D" id="1.10.287.110">
    <property type="entry name" value="DnaJ domain"/>
    <property type="match status" value="1"/>
</dbReference>
<dbReference type="Gene3D" id="2.10.230.10">
    <property type="entry name" value="Heat shock protein DnaJ, cysteine-rich domain"/>
    <property type="match status" value="1"/>
</dbReference>
<dbReference type="Gene3D" id="2.60.260.20">
    <property type="entry name" value="Urease metallochaperone UreE, N-terminal domain"/>
    <property type="match status" value="2"/>
</dbReference>
<dbReference type="HAMAP" id="MF_01152">
    <property type="entry name" value="DnaJ"/>
    <property type="match status" value="1"/>
</dbReference>
<dbReference type="InterPro" id="IPR012724">
    <property type="entry name" value="DnaJ"/>
</dbReference>
<dbReference type="InterPro" id="IPR002939">
    <property type="entry name" value="DnaJ_C"/>
</dbReference>
<dbReference type="InterPro" id="IPR001623">
    <property type="entry name" value="DnaJ_domain"/>
</dbReference>
<dbReference type="InterPro" id="IPR018253">
    <property type="entry name" value="DnaJ_domain_CS"/>
</dbReference>
<dbReference type="InterPro" id="IPR008971">
    <property type="entry name" value="HSP40/DnaJ_pept-bd"/>
</dbReference>
<dbReference type="InterPro" id="IPR001305">
    <property type="entry name" value="HSP_DnaJ_Cys-rich_dom"/>
</dbReference>
<dbReference type="InterPro" id="IPR036410">
    <property type="entry name" value="HSP_DnaJ_Cys-rich_dom_sf"/>
</dbReference>
<dbReference type="InterPro" id="IPR036869">
    <property type="entry name" value="J_dom_sf"/>
</dbReference>
<dbReference type="NCBIfam" id="TIGR02349">
    <property type="entry name" value="DnaJ_bact"/>
    <property type="match status" value="1"/>
</dbReference>
<dbReference type="NCBIfam" id="NF008035">
    <property type="entry name" value="PRK10767.1"/>
    <property type="match status" value="1"/>
</dbReference>
<dbReference type="PANTHER" id="PTHR43096:SF48">
    <property type="entry name" value="CHAPERONE PROTEIN DNAJ"/>
    <property type="match status" value="1"/>
</dbReference>
<dbReference type="PANTHER" id="PTHR43096">
    <property type="entry name" value="DNAJ HOMOLOG 1, MITOCHONDRIAL-RELATED"/>
    <property type="match status" value="1"/>
</dbReference>
<dbReference type="Pfam" id="PF00226">
    <property type="entry name" value="DnaJ"/>
    <property type="match status" value="1"/>
</dbReference>
<dbReference type="Pfam" id="PF01556">
    <property type="entry name" value="DnaJ_C"/>
    <property type="match status" value="1"/>
</dbReference>
<dbReference type="Pfam" id="PF00684">
    <property type="entry name" value="DnaJ_CXXCXGXG"/>
    <property type="match status" value="1"/>
</dbReference>
<dbReference type="PRINTS" id="PR00625">
    <property type="entry name" value="JDOMAIN"/>
</dbReference>
<dbReference type="SMART" id="SM00271">
    <property type="entry name" value="DnaJ"/>
    <property type="match status" value="1"/>
</dbReference>
<dbReference type="SUPFAM" id="SSF46565">
    <property type="entry name" value="Chaperone J-domain"/>
    <property type="match status" value="1"/>
</dbReference>
<dbReference type="SUPFAM" id="SSF57938">
    <property type="entry name" value="DnaJ/Hsp40 cysteine-rich domain"/>
    <property type="match status" value="1"/>
</dbReference>
<dbReference type="SUPFAM" id="SSF49493">
    <property type="entry name" value="HSP40/DnaJ peptide-binding domain"/>
    <property type="match status" value="2"/>
</dbReference>
<dbReference type="PROSITE" id="PS00636">
    <property type="entry name" value="DNAJ_1"/>
    <property type="match status" value="1"/>
</dbReference>
<dbReference type="PROSITE" id="PS50076">
    <property type="entry name" value="DNAJ_2"/>
    <property type="match status" value="1"/>
</dbReference>
<dbReference type="PROSITE" id="PS51188">
    <property type="entry name" value="ZF_CR"/>
    <property type="match status" value="1"/>
</dbReference>
<evidence type="ECO:0000250" key="1"/>
<evidence type="ECO:0000255" key="2">
    <source>
        <dbReference type="HAMAP-Rule" id="MF_01152"/>
    </source>
</evidence>
<evidence type="ECO:0000269" key="3">
    <source>
    </source>
</evidence>
<reference key="1">
    <citation type="submission" date="1996-06" db="EMBL/GenBank/DDBJ databases">
        <title>Salmonella typhimurium dnaK and dnaJ genes.</title>
        <authorList>
            <person name="Stephen R.J."/>
            <person name="Hinton J.C.D."/>
        </authorList>
    </citation>
    <scope>NUCLEOTIDE SEQUENCE [GENOMIC DNA]</scope>
    <source>
        <strain>LT2</strain>
    </source>
</reference>
<reference key="2">
    <citation type="journal article" date="2001" name="Nature">
        <title>Complete genome sequence of Salmonella enterica serovar Typhimurium LT2.</title>
        <authorList>
            <person name="McClelland M."/>
            <person name="Sanderson K.E."/>
            <person name="Spieth J."/>
            <person name="Clifton S.W."/>
            <person name="Latreille P."/>
            <person name="Courtney L."/>
            <person name="Porwollik S."/>
            <person name="Ali J."/>
            <person name="Dante M."/>
            <person name="Du F."/>
            <person name="Hou S."/>
            <person name="Layman D."/>
            <person name="Leonard S."/>
            <person name="Nguyen C."/>
            <person name="Scott K."/>
            <person name="Holmes A."/>
            <person name="Grewal N."/>
            <person name="Mulvaney E."/>
            <person name="Ryan E."/>
            <person name="Sun H."/>
            <person name="Florea L."/>
            <person name="Miller W."/>
            <person name="Stoneking T."/>
            <person name="Nhan M."/>
            <person name="Waterston R."/>
            <person name="Wilson R.K."/>
        </authorList>
    </citation>
    <scope>NUCLEOTIDE SEQUENCE [LARGE SCALE GENOMIC DNA]</scope>
    <source>
        <strain>LT2 / SGSC1412 / ATCC 700720</strain>
    </source>
</reference>
<reference key="3">
    <citation type="journal article" date="2004" name="Infect. Immun.">
        <title>The DnaK/DnaJ chaperone machinery of Salmonella enterica serovar Typhimurium is essential for invasion of epithelial cells and survival within macrophages, leading to systemic infection.</title>
        <authorList>
            <person name="Takaya A."/>
            <person name="Tomoyasu T."/>
            <person name="Matsui H."/>
            <person name="Yamamoto T."/>
        </authorList>
    </citation>
    <scope>ROLE IN PATHOGENICITY</scope>
    <source>
        <strain>x3306</strain>
    </source>
</reference>
<keyword id="KW-0143">Chaperone</keyword>
<keyword id="KW-0963">Cytoplasm</keyword>
<keyword id="KW-0235">DNA replication</keyword>
<keyword id="KW-0479">Metal-binding</keyword>
<keyword id="KW-1185">Reference proteome</keyword>
<keyword id="KW-0677">Repeat</keyword>
<keyword id="KW-0346">Stress response</keyword>
<keyword id="KW-0862">Zinc</keyword>
<keyword id="KW-0863">Zinc-finger</keyword>